<feature type="chain" id="PRO_0000064849" description="Apoptosis inducing factor BLCAP">
    <location>
        <begin position="1"/>
        <end position="87"/>
    </location>
</feature>
<feature type="transmembrane region" description="Helical" evidence="2">
    <location>
        <begin position="19"/>
        <end position="39"/>
    </location>
</feature>
<feature type="transmembrane region" description="Helical" evidence="2">
    <location>
        <begin position="43"/>
        <end position="63"/>
    </location>
</feature>
<gene>
    <name type="primary">BLCAP</name>
    <name type="synonym">BC10</name>
</gene>
<reference key="1">
    <citation type="submission" date="2000-05" db="EMBL/GenBank/DDBJ databases">
        <title>Identification of feline ortholog of human BLCAP (BC10).</title>
        <authorList>
            <person name="Hahn Y."/>
            <person name="Murphy W.J."/>
            <person name="Chung J.H."/>
        </authorList>
    </citation>
    <scope>NUCLEOTIDE SEQUENCE [MRNA]</scope>
    <source>
        <strain>Fca295</strain>
        <tissue>Testis</tissue>
    </source>
</reference>
<evidence type="ECO:0000250" key="1">
    <source>
        <dbReference type="UniProtKB" id="P62952"/>
    </source>
</evidence>
<evidence type="ECO:0000255" key="2"/>
<evidence type="ECO:0000305" key="3"/>
<protein>
    <recommendedName>
        <fullName evidence="3">Apoptosis inducing factor BLCAP</fullName>
    </recommendedName>
    <alternativeName>
        <fullName>Bladder cancer 10 kDa protein</fullName>
        <shortName>Bc10</shortName>
    </alternativeName>
    <alternativeName>
        <fullName>Bladder cancer-associated protein</fullName>
    </alternativeName>
</protein>
<keyword id="KW-0053">Apoptosis</keyword>
<keyword id="KW-0131">Cell cycle</keyword>
<keyword id="KW-0963">Cytoplasm</keyword>
<keyword id="KW-0472">Membrane</keyword>
<keyword id="KW-0539">Nucleus</keyword>
<keyword id="KW-1185">Reference proteome</keyword>
<keyword id="KW-0812">Transmembrane</keyword>
<keyword id="KW-1133">Transmembrane helix</keyword>
<keyword id="KW-0043">Tumor suppressor</keyword>
<dbReference type="EMBL" id="AB043791">
    <property type="protein sequence ID" value="BAA96306.1"/>
    <property type="molecule type" value="mRNA"/>
</dbReference>
<dbReference type="RefSeq" id="NP_001009852.1">
    <property type="nucleotide sequence ID" value="NM_001009852.1"/>
</dbReference>
<dbReference type="RefSeq" id="XP_019681730.1">
    <property type="nucleotide sequence ID" value="XM_019826171.3"/>
</dbReference>
<dbReference type="STRING" id="9685.ENSFCAP00000017162"/>
<dbReference type="PaxDb" id="9685-ENSFCAP00000017162"/>
<dbReference type="Ensembl" id="ENSFCAT00000014322.5">
    <property type="protein sequence ID" value="ENSFCAP00000017162.1"/>
    <property type="gene ID" value="ENSFCAG00000014318.5"/>
</dbReference>
<dbReference type="GeneID" id="493843"/>
<dbReference type="KEGG" id="fca:493843"/>
<dbReference type="CTD" id="10904"/>
<dbReference type="VGNC" id="VGNC:60120">
    <property type="gene designation" value="BLCAP"/>
</dbReference>
<dbReference type="eggNOG" id="KOG4489">
    <property type="taxonomic scope" value="Eukaryota"/>
</dbReference>
<dbReference type="GeneTree" id="ENSGT00390000014105"/>
<dbReference type="HOGENOM" id="CLU_181908_0_0_1"/>
<dbReference type="InParanoid" id="P62953"/>
<dbReference type="OMA" id="FLLCYSC"/>
<dbReference type="Proteomes" id="UP000011712">
    <property type="component" value="Chromosome A3"/>
</dbReference>
<dbReference type="Bgee" id="ENSFCAG00000014318">
    <property type="expression patterns" value="Expressed in prefrontal cortex and 10 other cell types or tissues"/>
</dbReference>
<dbReference type="GO" id="GO:0005737">
    <property type="term" value="C:cytoplasm"/>
    <property type="evidence" value="ECO:0007669"/>
    <property type="project" value="UniProtKB-SubCell"/>
</dbReference>
<dbReference type="GO" id="GO:0016020">
    <property type="term" value="C:membrane"/>
    <property type="evidence" value="ECO:0007669"/>
    <property type="project" value="UniProtKB-SubCell"/>
</dbReference>
<dbReference type="GO" id="GO:0005634">
    <property type="term" value="C:nucleus"/>
    <property type="evidence" value="ECO:0007669"/>
    <property type="project" value="UniProtKB-SubCell"/>
</dbReference>
<dbReference type="GO" id="GO:0030262">
    <property type="term" value="P:apoptotic nuclear changes"/>
    <property type="evidence" value="ECO:0007669"/>
    <property type="project" value="Ensembl"/>
</dbReference>
<dbReference type="InterPro" id="IPR009598">
    <property type="entry name" value="BCALP"/>
</dbReference>
<dbReference type="PANTHER" id="PTHR13259">
    <property type="entry name" value="BLADDER CANCER 10 KD PROTEIN HOMOLOG"/>
    <property type="match status" value="1"/>
</dbReference>
<dbReference type="PANTHER" id="PTHR13259:SF1">
    <property type="entry name" value="BLADDER CANCER-ASSOCIATED PROTEIN"/>
    <property type="match status" value="1"/>
</dbReference>
<dbReference type="Pfam" id="PF06726">
    <property type="entry name" value="BC10"/>
    <property type="match status" value="1"/>
</dbReference>
<dbReference type="SMART" id="SM01396">
    <property type="entry name" value="BC10"/>
    <property type="match status" value="1"/>
</dbReference>
<proteinExistence type="inferred from homology"/>
<organism>
    <name type="scientific">Felis catus</name>
    <name type="common">Cat</name>
    <name type="synonym">Felis silvestris catus</name>
    <dbReference type="NCBI Taxonomy" id="9685"/>
    <lineage>
        <taxon>Eukaryota</taxon>
        <taxon>Metazoa</taxon>
        <taxon>Chordata</taxon>
        <taxon>Craniata</taxon>
        <taxon>Vertebrata</taxon>
        <taxon>Euteleostomi</taxon>
        <taxon>Mammalia</taxon>
        <taxon>Eutheria</taxon>
        <taxon>Laurasiatheria</taxon>
        <taxon>Carnivora</taxon>
        <taxon>Feliformia</taxon>
        <taxon>Felidae</taxon>
        <taxon>Felinae</taxon>
        <taxon>Felis</taxon>
    </lineage>
</organism>
<comment type="function">
    <text evidence="1">Acts as a tumor suppressor; induces growth arrest at G(1)/S checkpoint and apoptosis via RB1-dependent and p53/TP53- and NF-kappa-B-independent mechanisms. Modulates expression of genes involved in the regulation of proliferation, cell cycle and apoptosis.</text>
</comment>
<comment type="subunit">
    <text evidence="1">Interacts with RB1 (phosphorylated and unphosphorylated) (By similarity). Interacts with STAT3; the interaction is promoted by cell stimulation with IL6 and phosphorylation of STAT3 (By similarity).</text>
</comment>
<comment type="subcellular location">
    <subcellularLocation>
        <location evidence="1">Cytoplasm</location>
    </subcellularLocation>
    <subcellularLocation>
        <location evidence="1">Nucleus</location>
    </subcellularLocation>
    <subcellularLocation>
        <location evidence="2">Membrane</location>
        <topology evidence="2">Multi-pass membrane protein</topology>
    </subcellularLocation>
</comment>
<comment type="similarity">
    <text evidence="3">Belongs to the BLCAP family.</text>
</comment>
<sequence>MYCLQWLLPVLLIPKPLNPALWFSHSMFMGFYLLSFLLERKPCTICALVFLAALFLICYSCWGNCFLYHCSDSPLPESAHDPGVVGT</sequence>
<name>BLCAP_FELCA</name>
<accession>P62953</accession>
<accession>O60629</accession>
<accession>Q9D3B5</accession>